<evidence type="ECO:0000250" key="1"/>
<evidence type="ECO:0000255" key="2"/>
<evidence type="ECO:0000255" key="3">
    <source>
        <dbReference type="PROSITE-ProRule" id="PRU00556"/>
    </source>
</evidence>
<evidence type="ECO:0000256" key="4">
    <source>
        <dbReference type="SAM" id="MobiDB-lite"/>
    </source>
</evidence>
<feature type="signal peptide" evidence="2">
    <location>
        <begin position="1"/>
        <end position="28"/>
    </location>
</feature>
<feature type="chain" id="PRO_0000259742" description="Putative surface cell antigen sca1">
    <location>
        <begin position="29"/>
        <end position="1902"/>
    </location>
</feature>
<feature type="domain" description="Autotransporter" evidence="3">
    <location>
        <begin position="1618"/>
        <end position="1902"/>
    </location>
</feature>
<feature type="region of interest" description="Disordered" evidence="4">
    <location>
        <begin position="140"/>
        <end position="273"/>
    </location>
</feature>
<feature type="region of interest" description="Disordered" evidence="4">
    <location>
        <begin position="420"/>
        <end position="485"/>
    </location>
</feature>
<feature type="region of interest" description="Disordered" evidence="4">
    <location>
        <begin position="707"/>
        <end position="729"/>
    </location>
</feature>
<feature type="region of interest" description="Disordered" evidence="4">
    <location>
        <begin position="858"/>
        <end position="885"/>
    </location>
</feature>
<feature type="region of interest" description="Disordered" evidence="4">
    <location>
        <begin position="1470"/>
        <end position="1548"/>
    </location>
</feature>
<feature type="compositionally biased region" description="Polar residues" evidence="4">
    <location>
        <begin position="146"/>
        <end position="159"/>
    </location>
</feature>
<feature type="compositionally biased region" description="Polar residues" evidence="4">
    <location>
        <begin position="168"/>
        <end position="197"/>
    </location>
</feature>
<feature type="compositionally biased region" description="Low complexity" evidence="4">
    <location>
        <begin position="199"/>
        <end position="212"/>
    </location>
</feature>
<feature type="compositionally biased region" description="Polar residues" evidence="4">
    <location>
        <begin position="225"/>
        <end position="238"/>
    </location>
</feature>
<feature type="compositionally biased region" description="Low complexity" evidence="4">
    <location>
        <begin position="246"/>
        <end position="264"/>
    </location>
</feature>
<feature type="compositionally biased region" description="Polar residues" evidence="4">
    <location>
        <begin position="423"/>
        <end position="439"/>
    </location>
</feature>
<feature type="compositionally biased region" description="Basic and acidic residues" evidence="4">
    <location>
        <begin position="445"/>
        <end position="482"/>
    </location>
</feature>
<feature type="compositionally biased region" description="Basic and acidic residues" evidence="4">
    <location>
        <begin position="863"/>
        <end position="874"/>
    </location>
</feature>
<feature type="compositionally biased region" description="Low complexity" evidence="4">
    <location>
        <begin position="1491"/>
        <end position="1507"/>
    </location>
</feature>
<feature type="compositionally biased region" description="Acidic residues" evidence="4">
    <location>
        <begin position="1521"/>
        <end position="1538"/>
    </location>
</feature>
<dbReference type="EMBL" id="AE006914">
    <property type="protein sequence ID" value="AAL02557.1"/>
    <property type="molecule type" value="Genomic_DNA"/>
</dbReference>
<dbReference type="EMBL" id="DQ306906">
    <property type="protein sequence ID" value="ABC41076.1"/>
    <property type="molecule type" value="Genomic_DNA"/>
</dbReference>
<dbReference type="PIR" id="C97702">
    <property type="entry name" value="C97702"/>
</dbReference>
<dbReference type="RefSeq" id="WP_010976707.1">
    <property type="nucleotide sequence ID" value="NC_003103.1"/>
</dbReference>
<dbReference type="GeneID" id="928642"/>
<dbReference type="KEGG" id="rco:RC0019"/>
<dbReference type="PATRIC" id="fig|272944.4.peg.21"/>
<dbReference type="HOGENOM" id="CLU_002510_0_0_5"/>
<dbReference type="Proteomes" id="UP000000816">
    <property type="component" value="Chromosome"/>
</dbReference>
<dbReference type="GO" id="GO:0009279">
    <property type="term" value="C:cell outer membrane"/>
    <property type="evidence" value="ECO:0007669"/>
    <property type="project" value="UniProtKB-SubCell"/>
</dbReference>
<dbReference type="Gene3D" id="2.40.128.130">
    <property type="entry name" value="Autotransporter beta-domain"/>
    <property type="match status" value="1"/>
</dbReference>
<dbReference type="InterPro" id="IPR005546">
    <property type="entry name" value="Autotransporte_beta"/>
</dbReference>
<dbReference type="InterPro" id="IPR036709">
    <property type="entry name" value="Autotransporte_beta_dom_sf"/>
</dbReference>
<dbReference type="Pfam" id="PF03797">
    <property type="entry name" value="Autotransporter"/>
    <property type="match status" value="1"/>
</dbReference>
<dbReference type="SMART" id="SM00869">
    <property type="entry name" value="Autotransporter"/>
    <property type="match status" value="1"/>
</dbReference>
<dbReference type="SUPFAM" id="SSF103515">
    <property type="entry name" value="Autotransporter"/>
    <property type="match status" value="1"/>
</dbReference>
<dbReference type="PROSITE" id="PS51208">
    <property type="entry name" value="AUTOTRANSPORTER"/>
    <property type="match status" value="1"/>
</dbReference>
<organism>
    <name type="scientific">Rickettsia conorii (strain ATCC VR-613 / Malish 7)</name>
    <dbReference type="NCBI Taxonomy" id="272944"/>
    <lineage>
        <taxon>Bacteria</taxon>
        <taxon>Pseudomonadati</taxon>
        <taxon>Pseudomonadota</taxon>
        <taxon>Alphaproteobacteria</taxon>
        <taxon>Rickettsiales</taxon>
        <taxon>Rickettsiaceae</taxon>
        <taxon>Rickettsieae</taxon>
        <taxon>Rickettsia</taxon>
        <taxon>spotted fever group</taxon>
    </lineage>
</organism>
<proteinExistence type="inferred from homology"/>
<name>SCA1_RICCN</name>
<accession>Q92JP8</accession>
<accession>Q20DN5</accession>
<keyword id="KW-0998">Cell outer membrane</keyword>
<keyword id="KW-0472">Membrane</keyword>
<keyword id="KW-0732">Signal</keyword>
<keyword id="KW-0812">Transmembrane</keyword>
<keyword id="KW-1134">Transmembrane beta strand</keyword>
<gene>
    <name type="primary">sca1</name>
    <name type="ordered locus">RC0019</name>
</gene>
<sequence length="1902" mass="212153">MNKLTEQHLLKKSRFLKYSLLASISVGAAIPFEGMAMSKEAFRIDLSNKLLNHVSQLNGYKDTTNNTPQQIGKVIVSEPKINTYTPSEIREMKISNKPKASNPLKDVPIEDHYKVVARSKSDVGTARKVRPITRCKTFAGIEKTEQSQNTYTPESTEQMPQKPEIIITASSPTVSPASNSFITAPNTPNTTLTSPEHYTTAPGTPSSTPATPYQSTSDSKPNDSLGANTPPNINTNSKAVRRLSFSSSGPQQQAVQSSSQVKSEVPPKPTFVPLPIKKSSTEIVAGMVSNISRVNEMIGIKLAEVTQAIDTTDKKDKERLQKLYTQLTSTQKTTEKLKSRAEEIETKIKIGENKDKIKKLEKELTSKNNKADRLFQKIEKIDIPANKVSIKSQETVPVTTASTEVSAFQAQQARINEARQGVFNKNKSSGGNARKSSAGTKREKKKQEAQKQLSEIKKQEKAIKTASDKAKEVAASAKKETSRTALRAMQDKMNGDSEQLNKIEENLKLLTPVVYNSSTGPTYKQSPKATPTIPLSHGVQRILGEQPEDEEGYLVPIKVQQQPYQEIEDPIPSHSKDIYEAKVSQYINYLNSIQPNQSNQAQIDSVIDGLATEMRKFSADQFSQKLGEIAHLASIKAYEGLFEKLYEIQQARILETQKVYEQAEISQSYAEYEENSRKSSIPVLSRSSSAKSVISSNFEEKSALLQTTTTDESLRSDNNWKNSAPYSSSPKLDKRGLEYLDLAGDAFVQNLKQPDTLTIETLGLITPTQNTTVAKSDSSRKNNVSGSISEIQQLQSEKMRTETLGVQDDLGLDLHYTPQETLTEKSTYLVSSKKKQGNIIKRAVSKVGSILQTNYAENRRRKRDGETSKQRTVDQEGEFGHAWGNENHKESSLSVVSGCIKKATQLISLLDAKRTAILQTTSPSQRRSVSLVLQEIENDYREAIKISQKLQQVLIRKPEDIKAYNAKAEKKLDAIKSRADKHFNNIETDVDVGFNPNGGNSHSMPTANMDILPKNLAVTPPTNVGSLYNSPQAQQFQEDHKNIIINDRSQGRLNLVDSTIVRELTDVDASIYNTAPPEVLKEAEALLDRSQGRLNLVDNTIKKGTQPLSNLSTIYESVSYENLASETIYKTEQPKPSISYTNTSKRKLPIPLFRSAELDKKLEYLDLEDKLLEVEEARIVKEKEAIAKLNQYQDPENLEFKRLAMEALDLSSKESQLKQKRKAIEAEFSLNEKSSSTDVSILRSYSIDDISGVLSDAESNLSRSPSVSGLEDLNNSNVMQLEELKSKHEKIANDYNKELELDTLNKEKIWLEGEIKHLDTEFKPKVTESKPVFSCSSSVGSINSFSNDDDLSSRDVVTPVDTLNIEINKDYVDTYIRVLSNKIQKIEEIQKIEELSGSSSRSEELNHIKEAMAYISNRIQDVEELDEKMLLAINAQLQEHDEKISSLLREEATDILAQLLLQEMLVSDGKSESTLPAGDEEQEDTEVSRQLSSLPALASSNESALALSDDREKECLALGDSSEDEESYDSGFEEEEETIGQLSDSDGDNLKITEVDTVIPLEQEAKKEMQTQISENAPTLNQAKVVNTIVNNMIRNRLDASMNMSNNMVAVGAGDEEESHIKRGLWMRGMYGTNNHGRVENMTGYRGTNKGATIGFDAEIDNNIVGIAYSNVHSVFKFKNSKNNDKELINSHVVSIYGQKELPKNFALQALVSASKNFIKDKTTYSYGDTKIKSNVKHRNHSYNAEALLHYNYLLQSKLVITPNIGLRYGKSRDGVYNETGVNVQEIALTMKENNILSGIVGTKVTVPLKDALKFNNLGLIFQGAVEHNFKEKTQRINRVVKIFDNTFKHNYLIPKQPKTSYNLGTGIIGSIKNTTISLDYNYYLNKHYRSHQGSVKLKVNL</sequence>
<protein>
    <recommendedName>
        <fullName>Putative surface cell antigen sca1</fullName>
    </recommendedName>
</protein>
<reference key="1">
    <citation type="journal article" date="2001" name="Science">
        <title>Mechanisms of evolution in Rickettsia conorii and R. prowazekii.</title>
        <authorList>
            <person name="Ogata H."/>
            <person name="Audic S."/>
            <person name="Renesto-Audiffren P."/>
            <person name="Fournier P.-E."/>
            <person name="Barbe V."/>
            <person name="Samson D."/>
            <person name="Roux V."/>
            <person name="Cossart P."/>
            <person name="Weissenbach J."/>
            <person name="Claverie J.-M."/>
            <person name="Raoult D."/>
        </authorList>
    </citation>
    <scope>NUCLEOTIDE SEQUENCE [LARGE SCALE GENOMIC DNA]</scope>
    <source>
        <strain>ATCC VR-613 / Malish 7</strain>
    </source>
</reference>
<reference key="2">
    <citation type="journal article" date="2006" name="BMC Microbiol.">
        <title>Sca1, a previously undescribed paralog from autotransporter protein-encoding genes in Rickettsia species.</title>
        <authorList>
            <person name="Ngwamidiba M."/>
            <person name="Blanc G."/>
            <person name="Raoult D."/>
            <person name="Fournier P.-E."/>
        </authorList>
    </citation>
    <scope>NUCLEOTIDE SEQUENCE [GENOMIC DNA] OF 1629-1790</scope>
    <scope>TRANSCRIPTION</scope>
    <source>
        <strain>ATCC VR-613 / Malish 7</strain>
    </source>
</reference>
<comment type="subcellular location">
    <subcellularLocation>
        <location evidence="1">Cell outer membrane</location>
    </subcellularLocation>
</comment>